<reference key="1">
    <citation type="journal article" date="2002" name="Nature">
        <title>Comparison of the genomes of two Xanthomonas pathogens with differing host specificities.</title>
        <authorList>
            <person name="da Silva A.C.R."/>
            <person name="Ferro J.A."/>
            <person name="Reinach F.C."/>
            <person name="Farah C.S."/>
            <person name="Furlan L.R."/>
            <person name="Quaggio R.B."/>
            <person name="Monteiro-Vitorello C.B."/>
            <person name="Van Sluys M.A."/>
            <person name="Almeida N.F. Jr."/>
            <person name="Alves L.M.C."/>
            <person name="do Amaral A.M."/>
            <person name="Bertolini M.C."/>
            <person name="Camargo L.E.A."/>
            <person name="Camarotte G."/>
            <person name="Cannavan F."/>
            <person name="Cardozo J."/>
            <person name="Chambergo F."/>
            <person name="Ciapina L.P."/>
            <person name="Cicarelli R.M.B."/>
            <person name="Coutinho L.L."/>
            <person name="Cursino-Santos J.R."/>
            <person name="El-Dorry H."/>
            <person name="Faria J.B."/>
            <person name="Ferreira A.J.S."/>
            <person name="Ferreira R.C.C."/>
            <person name="Ferro M.I.T."/>
            <person name="Formighieri E.F."/>
            <person name="Franco M.C."/>
            <person name="Greggio C.C."/>
            <person name="Gruber A."/>
            <person name="Katsuyama A.M."/>
            <person name="Kishi L.T."/>
            <person name="Leite R.P."/>
            <person name="Lemos E.G.M."/>
            <person name="Lemos M.V.F."/>
            <person name="Locali E.C."/>
            <person name="Machado M.A."/>
            <person name="Madeira A.M.B.N."/>
            <person name="Martinez-Rossi N.M."/>
            <person name="Martins E.C."/>
            <person name="Meidanis J."/>
            <person name="Menck C.F.M."/>
            <person name="Miyaki C.Y."/>
            <person name="Moon D.H."/>
            <person name="Moreira L.M."/>
            <person name="Novo M.T.M."/>
            <person name="Okura V.K."/>
            <person name="Oliveira M.C."/>
            <person name="Oliveira V.R."/>
            <person name="Pereira H.A."/>
            <person name="Rossi A."/>
            <person name="Sena J.A.D."/>
            <person name="Silva C."/>
            <person name="de Souza R.F."/>
            <person name="Spinola L.A.F."/>
            <person name="Takita M.A."/>
            <person name="Tamura R.E."/>
            <person name="Teixeira E.C."/>
            <person name="Tezza R.I.D."/>
            <person name="Trindade dos Santos M."/>
            <person name="Truffi D."/>
            <person name="Tsai S.M."/>
            <person name="White F.F."/>
            <person name="Setubal J.C."/>
            <person name="Kitajima J.P."/>
        </authorList>
    </citation>
    <scope>NUCLEOTIDE SEQUENCE [LARGE SCALE GENOMIC DNA]</scope>
    <source>
        <strain>ATCC 33913 / DSM 3586 / NCPPB 528 / LMG 568 / P 25</strain>
    </source>
</reference>
<reference evidence="6" key="2">
    <citation type="journal article" date="2006" name="Biochemistry">
        <title>Evolution of enzymatic activities in the enolase superfamily: L-fuconate dehydratase from Xanthomonas campestris.</title>
        <authorList>
            <person name="Yew W.S."/>
            <person name="Fedorov A.A."/>
            <person name="Fedorov E.V."/>
            <person name="Rakus J.F."/>
            <person name="Pierce R.W."/>
            <person name="Almo S.C."/>
            <person name="Gerlt J.A."/>
        </authorList>
    </citation>
    <scope>FUNCTION</scope>
    <scope>CATALYTIC ACTIVITY</scope>
    <scope>ACTIVITY REGULATION</scope>
    <scope>BIOPHYSICOCHEMICAL PROPERTIES</scope>
    <source>
        <strain evidence="4">ATCC 33913 / DSM 3586 / NCPPB 528 / LMG 568 / P 25</strain>
    </source>
</reference>
<sequence>MSMQRLCYVLDLHDDAALIAQYERWHRPSEVWPEVVASLQQAGIAELEIFRSGDRLVMLMTVGEDYDPAAKAARDAGDPRIQAWEALMWRFQKALPGSAPGEKWREAGRIFALSEAVSVQQGSAA</sequence>
<dbReference type="EC" id="5.1.3.29"/>
<dbReference type="EMBL" id="AE008922">
    <property type="protein sequence ID" value="AAM43291.1"/>
    <property type="molecule type" value="Genomic_DNA"/>
</dbReference>
<dbReference type="RefSeq" id="NP_639409.1">
    <property type="nucleotide sequence ID" value="NC_003902.1"/>
</dbReference>
<dbReference type="RefSeq" id="WP_011039139.1">
    <property type="nucleotide sequence ID" value="NC_003902.1"/>
</dbReference>
<dbReference type="SMR" id="Q8P3K1"/>
<dbReference type="STRING" id="190485.XCC4070"/>
<dbReference type="EnsemblBacteria" id="AAM43291">
    <property type="protein sequence ID" value="AAM43291"/>
    <property type="gene ID" value="XCC4070"/>
</dbReference>
<dbReference type="KEGG" id="xcc:XCC4070"/>
<dbReference type="PATRIC" id="fig|190485.4.peg.4362"/>
<dbReference type="eggNOG" id="COG3254">
    <property type="taxonomic scope" value="Bacteria"/>
</dbReference>
<dbReference type="HOGENOM" id="CLU_100689_4_0_6"/>
<dbReference type="OrthoDB" id="7272712at2"/>
<dbReference type="Proteomes" id="UP000001010">
    <property type="component" value="Chromosome"/>
</dbReference>
<dbReference type="GO" id="GO:0036373">
    <property type="term" value="F:L-fucose mutarotase activity"/>
    <property type="evidence" value="ECO:0007669"/>
    <property type="project" value="UniProtKB-EC"/>
</dbReference>
<dbReference type="Gene3D" id="3.30.70.100">
    <property type="match status" value="1"/>
</dbReference>
<dbReference type="InterPro" id="IPR052996">
    <property type="entry name" value="Carb_Metab_Mutarotase"/>
</dbReference>
<dbReference type="InterPro" id="IPR011008">
    <property type="entry name" value="Dimeric_a/b-barrel"/>
</dbReference>
<dbReference type="InterPro" id="IPR008000">
    <property type="entry name" value="Rham/fucose_mutarotase"/>
</dbReference>
<dbReference type="PANTHER" id="PTHR43239">
    <property type="entry name" value="UPF0734 PROTEIN DDB_G0273871/DDB_G0273177"/>
    <property type="match status" value="1"/>
</dbReference>
<dbReference type="PANTHER" id="PTHR43239:SF1">
    <property type="entry name" value="UPF0734 PROTEIN DDB_G0273871_DDB_G0273177"/>
    <property type="match status" value="1"/>
</dbReference>
<dbReference type="Pfam" id="PF05336">
    <property type="entry name" value="rhaM"/>
    <property type="match status" value="1"/>
</dbReference>
<dbReference type="SUPFAM" id="SSF54909">
    <property type="entry name" value="Dimeric alpha+beta barrel"/>
    <property type="match status" value="1"/>
</dbReference>
<accession>Q8P3K1</accession>
<feature type="chain" id="PRO_0000419048" description="L-fucose mutarotase">
    <location>
        <begin position="1"/>
        <end position="125"/>
    </location>
</feature>
<feature type="active site" description="Proton donor" evidence="1">
    <location>
        <position position="13"/>
    </location>
</feature>
<keyword id="KW-0413">Isomerase</keyword>
<keyword id="KW-1185">Reference proteome</keyword>
<proteinExistence type="evidence at protein level"/>
<name>FUCM_XANCP</name>
<organism>
    <name type="scientific">Xanthomonas campestris pv. campestris (strain ATCC 33913 / DSM 3586 / NCPPB 528 / LMG 568 / P 25)</name>
    <dbReference type="NCBI Taxonomy" id="190485"/>
    <lineage>
        <taxon>Bacteria</taxon>
        <taxon>Pseudomonadati</taxon>
        <taxon>Pseudomonadota</taxon>
        <taxon>Gammaproteobacteria</taxon>
        <taxon>Lysobacterales</taxon>
        <taxon>Lysobacteraceae</taxon>
        <taxon>Xanthomonas</taxon>
    </lineage>
</organism>
<comment type="function">
    <text evidence="4">Plays a role in the catabolism of L-fucose. Involved in the anomeric conversion of L-fucose.</text>
</comment>
<comment type="catalytic activity">
    <reaction evidence="4">
        <text>alpha-L-fucose = beta-L-fucose</text>
        <dbReference type="Rhea" id="RHEA:25580"/>
        <dbReference type="ChEBI" id="CHEBI:42548"/>
        <dbReference type="ChEBI" id="CHEBI:42589"/>
        <dbReference type="EC" id="5.1.3.29"/>
    </reaction>
</comment>
<comment type="activity regulation">
    <text evidence="4">Active toward L-galactopyranoside and D-arabinopyranoside but no D-fucopyranoside activity detected.</text>
</comment>
<comment type="biophysicochemical properties">
    <kinetics>
        <KM evidence="4">8.5 mM for L-fucose</KM>
    </kinetics>
</comment>
<comment type="similarity">
    <text evidence="3">Belongs to the RbsD / FucU family. FucU mutarotase subfamily.</text>
</comment>
<gene>
    <name type="ordered locus">XCC4070</name>
</gene>
<protein>
    <recommendedName>
        <fullName evidence="5">L-fucose mutarotase</fullName>
        <ecNumber>5.1.3.29</ecNumber>
    </recommendedName>
    <alternativeName>
        <fullName evidence="2">Fucose 1-epimerase</fullName>
    </alternativeName>
    <alternativeName>
        <fullName evidence="2">Type-2 mutarotase</fullName>
    </alternativeName>
</protein>
<evidence type="ECO:0000250" key="1"/>
<evidence type="ECO:0000250" key="2">
    <source>
        <dbReference type="UniProtKB" id="P0AEN8"/>
    </source>
</evidence>
<evidence type="ECO:0000255" key="3"/>
<evidence type="ECO:0000269" key="4">
    <source>
    </source>
</evidence>
<evidence type="ECO:0000303" key="5">
    <source>
    </source>
</evidence>
<evidence type="ECO:0000305" key="6"/>